<evidence type="ECO:0000250" key="1">
    <source>
        <dbReference type="UniProtKB" id="Q81HT3"/>
    </source>
</evidence>
<evidence type="ECO:0000255" key="2"/>
<evidence type="ECO:0000269" key="3">
    <source>
    </source>
</evidence>
<evidence type="ECO:0000305" key="4"/>
<evidence type="ECO:0000312" key="5">
    <source>
        <dbReference type="EMBL" id="AAP24716.1"/>
    </source>
</evidence>
<evidence type="ECO:0000312" key="6">
    <source>
        <dbReference type="EMBL" id="AAT29808.1"/>
    </source>
</evidence>
<gene>
    <name evidence="5" type="primary">qoxA</name>
    <name type="ordered locus">BA_0703</name>
    <name type="ordered locus">GBAA_0703</name>
    <name type="ordered locus">BAS0669</name>
</gene>
<dbReference type="EC" id="1.10.3.-"/>
<dbReference type="EMBL" id="AE016879">
    <property type="protein sequence ID" value="AAP24716.1"/>
    <property type="molecule type" value="Genomic_DNA"/>
</dbReference>
<dbReference type="EMBL" id="AE017334">
    <property type="protein sequence ID" value="AAT29808.1"/>
    <property type="molecule type" value="Genomic_DNA"/>
</dbReference>
<dbReference type="EMBL" id="AE017225">
    <property type="protein sequence ID" value="AAT52997.1"/>
    <property type="molecule type" value="Genomic_DNA"/>
</dbReference>
<dbReference type="RefSeq" id="NP_843230.1">
    <property type="nucleotide sequence ID" value="NC_003997.3"/>
</dbReference>
<dbReference type="RefSeq" id="WP_001176167.1">
    <property type="nucleotide sequence ID" value="NZ_WXXJ01000017.1"/>
</dbReference>
<dbReference type="RefSeq" id="YP_026946.1">
    <property type="nucleotide sequence ID" value="NC_005945.1"/>
</dbReference>
<dbReference type="SMR" id="Q81V01"/>
<dbReference type="STRING" id="261594.GBAA_0703"/>
<dbReference type="DNASU" id="1088154"/>
<dbReference type="KEGG" id="ban:BA_0703"/>
<dbReference type="KEGG" id="bar:GBAA_0703"/>
<dbReference type="KEGG" id="bat:BAS0669"/>
<dbReference type="PATRIC" id="fig|198094.11.peg.702"/>
<dbReference type="eggNOG" id="COG1622">
    <property type="taxonomic scope" value="Bacteria"/>
</dbReference>
<dbReference type="HOGENOM" id="CLU_036876_6_0_9"/>
<dbReference type="OMA" id="TAMNSFF"/>
<dbReference type="OrthoDB" id="9783445at2"/>
<dbReference type="Proteomes" id="UP000000427">
    <property type="component" value="Chromosome"/>
</dbReference>
<dbReference type="Proteomes" id="UP000000594">
    <property type="component" value="Chromosome"/>
</dbReference>
<dbReference type="GO" id="GO:0005886">
    <property type="term" value="C:plasma membrane"/>
    <property type="evidence" value="ECO:0007669"/>
    <property type="project" value="UniProtKB-SubCell"/>
</dbReference>
<dbReference type="GO" id="GO:0005507">
    <property type="term" value="F:copper ion binding"/>
    <property type="evidence" value="ECO:0007669"/>
    <property type="project" value="InterPro"/>
</dbReference>
<dbReference type="GO" id="GO:0009486">
    <property type="term" value="F:cytochrome bo3 ubiquinol oxidase activity"/>
    <property type="evidence" value="ECO:0007669"/>
    <property type="project" value="InterPro"/>
</dbReference>
<dbReference type="GO" id="GO:0004129">
    <property type="term" value="F:cytochrome-c oxidase activity"/>
    <property type="evidence" value="ECO:0007669"/>
    <property type="project" value="InterPro"/>
</dbReference>
<dbReference type="GO" id="GO:0016682">
    <property type="term" value="F:oxidoreductase activity, acting on diphenols and related substances as donors, oxygen as acceptor"/>
    <property type="evidence" value="ECO:0000250"/>
    <property type="project" value="UniProtKB"/>
</dbReference>
<dbReference type="GO" id="GO:0042773">
    <property type="term" value="P:ATP synthesis coupled electron transport"/>
    <property type="evidence" value="ECO:0000250"/>
    <property type="project" value="UniProtKB"/>
</dbReference>
<dbReference type="CDD" id="cd04212">
    <property type="entry name" value="CuRO_UO_II"/>
    <property type="match status" value="1"/>
</dbReference>
<dbReference type="FunFam" id="1.10.287.90:FF:000005">
    <property type="entry name" value="Quinol oxidase subunit 2"/>
    <property type="match status" value="1"/>
</dbReference>
<dbReference type="FunFam" id="2.60.40.420:FF:000014">
    <property type="entry name" value="Quinol oxidase subunit 2"/>
    <property type="match status" value="1"/>
</dbReference>
<dbReference type="Gene3D" id="1.10.287.90">
    <property type="match status" value="1"/>
</dbReference>
<dbReference type="Gene3D" id="2.60.40.420">
    <property type="entry name" value="Cupredoxins - blue copper proteins"/>
    <property type="match status" value="1"/>
</dbReference>
<dbReference type="InterPro" id="IPR045187">
    <property type="entry name" value="CcO_II"/>
</dbReference>
<dbReference type="InterPro" id="IPR002429">
    <property type="entry name" value="CcO_II-like_C"/>
</dbReference>
<dbReference type="InterPro" id="IPR008972">
    <property type="entry name" value="Cupredoxin"/>
</dbReference>
<dbReference type="InterPro" id="IPR034227">
    <property type="entry name" value="CuRO_UO_II"/>
</dbReference>
<dbReference type="InterPro" id="IPR011759">
    <property type="entry name" value="Cyt_c_oxidase_su2_TM_dom"/>
</dbReference>
<dbReference type="InterPro" id="IPR036257">
    <property type="entry name" value="Cyt_c_oxidase_su2_TM_sf"/>
</dbReference>
<dbReference type="InterPro" id="IPR006333">
    <property type="entry name" value="Cyt_o_ubiquinol_oxidase_su2"/>
</dbReference>
<dbReference type="InterPro" id="IPR006332">
    <property type="entry name" value="QoxA"/>
</dbReference>
<dbReference type="NCBIfam" id="TIGR01432">
    <property type="entry name" value="QOXA"/>
    <property type="match status" value="1"/>
</dbReference>
<dbReference type="PANTHER" id="PTHR22888:SF18">
    <property type="entry name" value="CYTOCHROME BO(3) UBIQUINOL OXIDASE SUBUNIT 2"/>
    <property type="match status" value="1"/>
</dbReference>
<dbReference type="PANTHER" id="PTHR22888">
    <property type="entry name" value="CYTOCHROME C OXIDASE, SUBUNIT II"/>
    <property type="match status" value="1"/>
</dbReference>
<dbReference type="Pfam" id="PF02790">
    <property type="entry name" value="COX2_TM"/>
    <property type="match status" value="1"/>
</dbReference>
<dbReference type="PIRSF" id="PIRSF000292">
    <property type="entry name" value="Ubi_od_II"/>
    <property type="match status" value="1"/>
</dbReference>
<dbReference type="PRINTS" id="PR01166">
    <property type="entry name" value="CYCOXIDASEII"/>
</dbReference>
<dbReference type="SUPFAM" id="SSF49503">
    <property type="entry name" value="Cupredoxins"/>
    <property type="match status" value="1"/>
</dbReference>
<dbReference type="SUPFAM" id="SSF81464">
    <property type="entry name" value="Cytochrome c oxidase subunit II-like, transmembrane region"/>
    <property type="match status" value="1"/>
</dbReference>
<dbReference type="PROSITE" id="PS50857">
    <property type="entry name" value="COX2_CUA"/>
    <property type="match status" value="1"/>
</dbReference>
<dbReference type="PROSITE" id="PS50999">
    <property type="entry name" value="COX2_TM"/>
    <property type="match status" value="1"/>
</dbReference>
<comment type="function">
    <text evidence="1">Catalyzes quinol oxidation with the concomitant reduction of oxygen to water. Subunit II transfers the electrons from a quinol to the binuclear center of the catalytic subunit I (By similarity).</text>
</comment>
<comment type="catalytic activity">
    <reaction evidence="4">
        <text>2 a quinol + O2 = 2 a quinone + 2 H2O</text>
        <dbReference type="Rhea" id="RHEA:55376"/>
        <dbReference type="ChEBI" id="CHEBI:15377"/>
        <dbReference type="ChEBI" id="CHEBI:15379"/>
        <dbReference type="ChEBI" id="CHEBI:24646"/>
        <dbReference type="ChEBI" id="CHEBI:132124"/>
    </reaction>
</comment>
<comment type="subcellular location">
    <subcellularLocation>
        <location>Cell membrane</location>
        <topology>Multi-pass membrane protein</topology>
    </subcellularLocation>
</comment>
<comment type="similarity">
    <text evidence="2">Belongs to the cytochrome c oxidase subunit 2 family.</text>
</comment>
<proteinExistence type="inferred from homology"/>
<organism>
    <name type="scientific">Bacillus anthracis</name>
    <dbReference type="NCBI Taxonomy" id="1392"/>
    <lineage>
        <taxon>Bacteria</taxon>
        <taxon>Bacillati</taxon>
        <taxon>Bacillota</taxon>
        <taxon>Bacilli</taxon>
        <taxon>Bacillales</taxon>
        <taxon>Bacillaceae</taxon>
        <taxon>Bacillus</taxon>
        <taxon>Bacillus cereus group</taxon>
    </lineage>
</organism>
<keyword id="KW-1003">Cell membrane</keyword>
<keyword id="KW-0249">Electron transport</keyword>
<keyword id="KW-0472">Membrane</keyword>
<keyword id="KW-0560">Oxidoreductase</keyword>
<keyword id="KW-1185">Reference proteome</keyword>
<keyword id="KW-0679">Respiratory chain</keyword>
<keyword id="KW-0732">Signal</keyword>
<keyword id="KW-0812">Transmembrane</keyword>
<keyword id="KW-1133">Transmembrane helix</keyword>
<keyword id="KW-0813">Transport</keyword>
<sequence>MQLKKAFWKLASLLPLSLLLFLGGCDKKLAVLNPQGPVAKAQYDLIVWSFLLMSLIIAIVFILFTVILIRYREKPENMDYEPPEQHGNTLLEIIWTLVPVIIVIALSIPTVKATYASEEVPKESKHIKPVEIYVTSANWKWLFSYPEEKIETVNYLNIPAGVPIQFKLTSVGPMNAFWVPELGGMKYTMDGMIMDLYLQADKPGSYLGRSANFSGEGFTHMEFEVEAKTKEKYDKWVKEVQQTAPKLTEDKYNEIVKPGVVGRMTFSSHHLSYVDPKSLEYCDYNYYKNKK</sequence>
<feature type="signal peptide" evidence="1">
    <location>
        <begin position="1"/>
        <end position="28"/>
    </location>
</feature>
<feature type="chain" id="PRO_0000006066" description="Quinol oxidase subunit 2">
    <location>
        <begin position="29"/>
        <end position="291"/>
    </location>
</feature>
<feature type="transmembrane region" description="Helical" evidence="2">
    <location>
        <begin position="49"/>
        <end position="69"/>
    </location>
</feature>
<feature type="transmembrane region" description="Helical" evidence="2">
    <location>
        <begin position="91"/>
        <end position="111"/>
    </location>
</feature>
<protein>
    <recommendedName>
        <fullName>Quinol oxidase subunit 2</fullName>
        <ecNumber>1.10.3.-</ecNumber>
    </recommendedName>
    <alternativeName>
        <fullName>Cytochrome aa(3) subunit 2</fullName>
    </alternativeName>
    <alternativeName>
        <fullName>Quinol oxidase polypeptide II</fullName>
    </alternativeName>
</protein>
<name>QOX2_BACAN</name>
<reference key="1">
    <citation type="journal article" date="2003" name="Nature">
        <title>The genome sequence of Bacillus anthracis Ames and comparison to closely related bacteria.</title>
        <authorList>
            <person name="Read T.D."/>
            <person name="Peterson S.N."/>
            <person name="Tourasse N.J."/>
            <person name="Baillie L.W."/>
            <person name="Paulsen I.T."/>
            <person name="Nelson K.E."/>
            <person name="Tettelin H."/>
            <person name="Fouts D.E."/>
            <person name="Eisen J.A."/>
            <person name="Gill S.R."/>
            <person name="Holtzapple E.K."/>
            <person name="Okstad O.A."/>
            <person name="Helgason E."/>
            <person name="Rilstone J."/>
            <person name="Wu M."/>
            <person name="Kolonay J.F."/>
            <person name="Beanan M.J."/>
            <person name="Dodson R.J."/>
            <person name="Brinkac L.M."/>
            <person name="Gwinn M.L."/>
            <person name="DeBoy R.T."/>
            <person name="Madpu R."/>
            <person name="Daugherty S.C."/>
            <person name="Durkin A.S."/>
            <person name="Haft D.H."/>
            <person name="Nelson W.C."/>
            <person name="Peterson J.D."/>
            <person name="Pop M."/>
            <person name="Khouri H.M."/>
            <person name="Radune D."/>
            <person name="Benton J.L."/>
            <person name="Mahamoud Y."/>
            <person name="Jiang L."/>
            <person name="Hance I.R."/>
            <person name="Weidman J.F."/>
            <person name="Berry K.J."/>
            <person name="Plaut R.D."/>
            <person name="Wolf A.M."/>
            <person name="Watkins K.L."/>
            <person name="Nierman W.C."/>
            <person name="Hazen A."/>
            <person name="Cline R.T."/>
            <person name="Redmond C."/>
            <person name="Thwaite J.E."/>
            <person name="White O."/>
            <person name="Salzberg S.L."/>
            <person name="Thomason B."/>
            <person name="Friedlander A.M."/>
            <person name="Koehler T.M."/>
            <person name="Hanna P.C."/>
            <person name="Kolstoe A.-B."/>
            <person name="Fraser C.M."/>
        </authorList>
    </citation>
    <scope>NUCLEOTIDE SEQUENCE [LARGE SCALE GENOMIC DNA]</scope>
    <source>
        <strain evidence="3">Ames / isolate Porton</strain>
    </source>
</reference>
<reference key="2">
    <citation type="journal article" date="2009" name="J. Bacteriol.">
        <title>The complete genome sequence of Bacillus anthracis Ames 'Ancestor'.</title>
        <authorList>
            <person name="Ravel J."/>
            <person name="Jiang L."/>
            <person name="Stanley S.T."/>
            <person name="Wilson M.R."/>
            <person name="Decker R.S."/>
            <person name="Read T.D."/>
            <person name="Worsham P."/>
            <person name="Keim P.S."/>
            <person name="Salzberg S.L."/>
            <person name="Fraser-Liggett C.M."/>
            <person name="Rasko D.A."/>
        </authorList>
    </citation>
    <scope>NUCLEOTIDE SEQUENCE [LARGE SCALE GENOMIC DNA]</scope>
    <source>
        <strain>Ames ancestor</strain>
    </source>
</reference>
<reference evidence="6" key="3">
    <citation type="submission" date="2004-01" db="EMBL/GenBank/DDBJ databases">
        <title>Complete genome sequence of Bacillus anthracis Sterne.</title>
        <authorList>
            <person name="Brettin T.S."/>
            <person name="Bruce D."/>
            <person name="Challacombe J.F."/>
            <person name="Gilna P."/>
            <person name="Han C."/>
            <person name="Hill K."/>
            <person name="Hitchcock P."/>
            <person name="Jackson P."/>
            <person name="Keim P."/>
            <person name="Longmire J."/>
            <person name="Lucas S."/>
            <person name="Okinaka R."/>
            <person name="Richardson P."/>
            <person name="Rubin E."/>
            <person name="Tice H."/>
        </authorList>
    </citation>
    <scope>NUCLEOTIDE SEQUENCE [LARGE SCALE GENOMIC DNA]</scope>
    <source>
        <strain>Sterne</strain>
    </source>
</reference>
<accession>Q81V01</accession>
<accession>Q6I384</accession>
<accession>Q6KX02</accession>